<evidence type="ECO:0000255" key="1">
    <source>
        <dbReference type="HAMAP-Rule" id="MF_00156"/>
    </source>
</evidence>
<protein>
    <recommendedName>
        <fullName evidence="1">3-methyl-2-oxobutanoate hydroxymethyltransferase</fullName>
        <ecNumber evidence="1">2.1.2.11</ecNumber>
    </recommendedName>
    <alternativeName>
        <fullName evidence="1">Ketopantoate hydroxymethyltransferase</fullName>
        <shortName evidence="1">KPHMT</shortName>
    </alternativeName>
</protein>
<feature type="chain" id="PRO_1000011365" description="3-methyl-2-oxobutanoate hydroxymethyltransferase">
    <location>
        <begin position="1"/>
        <end position="271"/>
    </location>
</feature>
<feature type="active site" description="Proton acceptor" evidence="1">
    <location>
        <position position="189"/>
    </location>
</feature>
<feature type="binding site" evidence="1">
    <location>
        <begin position="53"/>
        <end position="54"/>
    </location>
    <ligand>
        <name>3-methyl-2-oxobutanoate</name>
        <dbReference type="ChEBI" id="CHEBI:11851"/>
    </ligand>
</feature>
<feature type="binding site" evidence="1">
    <location>
        <position position="53"/>
    </location>
    <ligand>
        <name>Mg(2+)</name>
        <dbReference type="ChEBI" id="CHEBI:18420"/>
    </ligand>
</feature>
<feature type="binding site" evidence="1">
    <location>
        <position position="92"/>
    </location>
    <ligand>
        <name>3-methyl-2-oxobutanoate</name>
        <dbReference type="ChEBI" id="CHEBI:11851"/>
    </ligand>
</feature>
<feature type="binding site" evidence="1">
    <location>
        <position position="92"/>
    </location>
    <ligand>
        <name>Mg(2+)</name>
        <dbReference type="ChEBI" id="CHEBI:18420"/>
    </ligand>
</feature>
<feature type="binding site" evidence="1">
    <location>
        <position position="120"/>
    </location>
    <ligand>
        <name>3-methyl-2-oxobutanoate</name>
        <dbReference type="ChEBI" id="CHEBI:11851"/>
    </ligand>
</feature>
<feature type="binding site" evidence="1">
    <location>
        <position position="122"/>
    </location>
    <ligand>
        <name>Mg(2+)</name>
        <dbReference type="ChEBI" id="CHEBI:18420"/>
    </ligand>
</feature>
<comment type="function">
    <text evidence="1">Catalyzes the reversible reaction in which hydroxymethyl group from 5,10-methylenetetrahydrofolate is transferred onto alpha-ketoisovalerate to form ketopantoate.</text>
</comment>
<comment type="catalytic activity">
    <reaction evidence="1">
        <text>3-methyl-2-oxobutanoate + (6R)-5,10-methylene-5,6,7,8-tetrahydrofolate + H2O = 2-dehydropantoate + (6S)-5,6,7,8-tetrahydrofolate</text>
        <dbReference type="Rhea" id="RHEA:11824"/>
        <dbReference type="ChEBI" id="CHEBI:11561"/>
        <dbReference type="ChEBI" id="CHEBI:11851"/>
        <dbReference type="ChEBI" id="CHEBI:15377"/>
        <dbReference type="ChEBI" id="CHEBI:15636"/>
        <dbReference type="ChEBI" id="CHEBI:57453"/>
        <dbReference type="EC" id="2.1.2.11"/>
    </reaction>
</comment>
<comment type="cofactor">
    <cofactor evidence="1">
        <name>Mg(2+)</name>
        <dbReference type="ChEBI" id="CHEBI:18420"/>
    </cofactor>
    <text evidence="1">Binds 1 Mg(2+) ion per subunit.</text>
</comment>
<comment type="pathway">
    <text evidence="1">Cofactor biosynthesis; (R)-pantothenate biosynthesis; (R)-pantoate from 3-methyl-2-oxobutanoate: step 1/2.</text>
</comment>
<comment type="subunit">
    <text evidence="1">Homodecamer; pentamer of dimers.</text>
</comment>
<comment type="subcellular location">
    <subcellularLocation>
        <location evidence="1">Cytoplasm</location>
    </subcellularLocation>
</comment>
<comment type="similarity">
    <text evidence="1">Belongs to the PanB family.</text>
</comment>
<sequence length="271" mass="28618">MTYLQESSRPAVTVPKLQAMREAGEKIAMLTSYDASFAALLDRANVDVQLIGDSLGNVLQGQATTLPVTLDDIAYHTACVARAQPRGLVVADLPFGTYGTPADAFASAVKLMRAGAQMVKLEGGEWLAETVRFLVERAVPVCAHVGLTPQSVHAFGGFKVQGKTEAGAAQLLRDARAVEEAGAQLIVLEAVPTLVAAEVTRELSIPTIGIGAGAECSGQVLVLHDMLGVFPGKRPRFVKDFMQGQPSIFAAVEAYVRAVKDGSFPGPEHSF</sequence>
<name>PANB_BURMS</name>
<gene>
    <name evidence="1" type="primary">panB</name>
    <name type="ordered locus">BMASAVP1_A0504</name>
</gene>
<dbReference type="EC" id="2.1.2.11" evidence="1"/>
<dbReference type="EMBL" id="CP000526">
    <property type="protein sequence ID" value="ABM52095.1"/>
    <property type="molecule type" value="Genomic_DNA"/>
</dbReference>
<dbReference type="RefSeq" id="WP_004194137.1">
    <property type="nucleotide sequence ID" value="NC_008785.1"/>
</dbReference>
<dbReference type="SMR" id="A1V0V0"/>
<dbReference type="GeneID" id="93061412"/>
<dbReference type="KEGG" id="bmv:BMASAVP1_A0504"/>
<dbReference type="HOGENOM" id="CLU_036645_1_0_4"/>
<dbReference type="UniPathway" id="UPA00028">
    <property type="reaction ID" value="UER00003"/>
</dbReference>
<dbReference type="GO" id="GO:0005737">
    <property type="term" value="C:cytoplasm"/>
    <property type="evidence" value="ECO:0007669"/>
    <property type="project" value="UniProtKB-SubCell"/>
</dbReference>
<dbReference type="GO" id="GO:0003864">
    <property type="term" value="F:3-methyl-2-oxobutanoate hydroxymethyltransferase activity"/>
    <property type="evidence" value="ECO:0007669"/>
    <property type="project" value="UniProtKB-UniRule"/>
</dbReference>
<dbReference type="GO" id="GO:0000287">
    <property type="term" value="F:magnesium ion binding"/>
    <property type="evidence" value="ECO:0007669"/>
    <property type="project" value="TreeGrafter"/>
</dbReference>
<dbReference type="GO" id="GO:0015940">
    <property type="term" value="P:pantothenate biosynthetic process"/>
    <property type="evidence" value="ECO:0007669"/>
    <property type="project" value="UniProtKB-UniRule"/>
</dbReference>
<dbReference type="CDD" id="cd06557">
    <property type="entry name" value="KPHMT-like"/>
    <property type="match status" value="1"/>
</dbReference>
<dbReference type="FunFam" id="3.20.20.60:FF:000003">
    <property type="entry name" value="3-methyl-2-oxobutanoate hydroxymethyltransferase"/>
    <property type="match status" value="1"/>
</dbReference>
<dbReference type="Gene3D" id="3.20.20.60">
    <property type="entry name" value="Phosphoenolpyruvate-binding domains"/>
    <property type="match status" value="1"/>
</dbReference>
<dbReference type="HAMAP" id="MF_00156">
    <property type="entry name" value="PanB"/>
    <property type="match status" value="1"/>
</dbReference>
<dbReference type="InterPro" id="IPR003700">
    <property type="entry name" value="Pantoate_hydroxy_MeTrfase"/>
</dbReference>
<dbReference type="InterPro" id="IPR015813">
    <property type="entry name" value="Pyrv/PenolPyrv_kinase-like_dom"/>
</dbReference>
<dbReference type="InterPro" id="IPR040442">
    <property type="entry name" value="Pyrv_kinase-like_dom_sf"/>
</dbReference>
<dbReference type="NCBIfam" id="TIGR00222">
    <property type="entry name" value="panB"/>
    <property type="match status" value="1"/>
</dbReference>
<dbReference type="NCBIfam" id="NF001452">
    <property type="entry name" value="PRK00311.1"/>
    <property type="match status" value="1"/>
</dbReference>
<dbReference type="PANTHER" id="PTHR20881">
    <property type="entry name" value="3-METHYL-2-OXOBUTANOATE HYDROXYMETHYLTRANSFERASE"/>
    <property type="match status" value="1"/>
</dbReference>
<dbReference type="PANTHER" id="PTHR20881:SF0">
    <property type="entry name" value="3-METHYL-2-OXOBUTANOATE HYDROXYMETHYLTRANSFERASE"/>
    <property type="match status" value="1"/>
</dbReference>
<dbReference type="Pfam" id="PF02548">
    <property type="entry name" value="Pantoate_transf"/>
    <property type="match status" value="1"/>
</dbReference>
<dbReference type="PIRSF" id="PIRSF000388">
    <property type="entry name" value="Pantoate_hydroxy_MeTrfase"/>
    <property type="match status" value="1"/>
</dbReference>
<dbReference type="SUPFAM" id="SSF51621">
    <property type="entry name" value="Phosphoenolpyruvate/pyruvate domain"/>
    <property type="match status" value="1"/>
</dbReference>
<proteinExistence type="inferred from homology"/>
<organism>
    <name type="scientific">Burkholderia mallei (strain SAVP1)</name>
    <dbReference type="NCBI Taxonomy" id="320388"/>
    <lineage>
        <taxon>Bacteria</taxon>
        <taxon>Pseudomonadati</taxon>
        <taxon>Pseudomonadota</taxon>
        <taxon>Betaproteobacteria</taxon>
        <taxon>Burkholderiales</taxon>
        <taxon>Burkholderiaceae</taxon>
        <taxon>Burkholderia</taxon>
        <taxon>pseudomallei group</taxon>
    </lineage>
</organism>
<reference key="1">
    <citation type="journal article" date="2010" name="Genome Biol. Evol.">
        <title>Continuing evolution of Burkholderia mallei through genome reduction and large-scale rearrangements.</title>
        <authorList>
            <person name="Losada L."/>
            <person name="Ronning C.M."/>
            <person name="DeShazer D."/>
            <person name="Woods D."/>
            <person name="Fedorova N."/>
            <person name="Kim H.S."/>
            <person name="Shabalina S.A."/>
            <person name="Pearson T.R."/>
            <person name="Brinkac L."/>
            <person name="Tan P."/>
            <person name="Nandi T."/>
            <person name="Crabtree J."/>
            <person name="Badger J."/>
            <person name="Beckstrom-Sternberg S."/>
            <person name="Saqib M."/>
            <person name="Schutzer S.E."/>
            <person name="Keim P."/>
            <person name="Nierman W.C."/>
        </authorList>
    </citation>
    <scope>NUCLEOTIDE SEQUENCE [LARGE SCALE GENOMIC DNA]</scope>
    <source>
        <strain>SAVP1</strain>
    </source>
</reference>
<keyword id="KW-0963">Cytoplasm</keyword>
<keyword id="KW-0460">Magnesium</keyword>
<keyword id="KW-0479">Metal-binding</keyword>
<keyword id="KW-0566">Pantothenate biosynthesis</keyword>
<keyword id="KW-0808">Transferase</keyword>
<accession>A1V0V0</accession>